<protein>
    <recommendedName>
        <fullName evidence="1">Small ribosomal subunit protein eS1A</fullName>
    </recommendedName>
    <alternativeName>
        <fullName evidence="2">40S ribosomal protein S1-A</fullName>
    </alternativeName>
</protein>
<name>RS3A1_PICST</name>
<sequence length="256" mass="28805">MAVGKNKRLSKGKKGLKKKIIDPFTRKDWFDIKAPSTFENRNVGKTLINRSTGMKNAADGLKGRIVEVNLADLQGSEDHSYRNVKLRVDEVQGKNLLTNFHGLSFTSDKLRSLVRKWQSLVEANVTVKTADDYVLRVFALAFTKRQANQVKKTTYAQSSKLREVRKKMSEIMQREVSAVTLAQLTSKLIPEVIGREIEKSTQTIFPLQNVHIRKVKVLKQPKFDLGALLALHGESGGEEKGRKVNTGFKDVVLESV</sequence>
<gene>
    <name evidence="1" type="primary">RPS1A</name>
    <name type="ORF">PICST_46030</name>
</gene>
<reference key="1">
    <citation type="journal article" date="2007" name="Nat. Biotechnol.">
        <title>Genome sequence of the lignocellulose-bioconverting and xylose-fermenting yeast Pichia stipitis.</title>
        <authorList>
            <person name="Jeffries T.W."/>
            <person name="Grigoriev I.V."/>
            <person name="Grimwood J."/>
            <person name="Laplaza J.M."/>
            <person name="Aerts A."/>
            <person name="Salamov A."/>
            <person name="Schmutz J."/>
            <person name="Lindquist E."/>
            <person name="Dehal P."/>
            <person name="Shapiro H."/>
            <person name="Jin Y.-S."/>
            <person name="Passoth V."/>
            <person name="Richardson P.M."/>
        </authorList>
    </citation>
    <scope>NUCLEOTIDE SEQUENCE [LARGE SCALE GENOMIC DNA]</scope>
    <source>
        <strain>ATCC 58785 / CBS 6054 / NBRC 10063 / NRRL Y-11545</strain>
    </source>
</reference>
<organism>
    <name type="scientific">Scheffersomyces stipitis (strain ATCC 58785 / CBS 6054 / NBRC 10063 / NRRL Y-11545)</name>
    <name type="common">Yeast</name>
    <name type="synonym">Pichia stipitis</name>
    <dbReference type="NCBI Taxonomy" id="322104"/>
    <lineage>
        <taxon>Eukaryota</taxon>
        <taxon>Fungi</taxon>
        <taxon>Dikarya</taxon>
        <taxon>Ascomycota</taxon>
        <taxon>Saccharomycotina</taxon>
        <taxon>Pichiomycetes</taxon>
        <taxon>Debaryomycetaceae</taxon>
        <taxon>Scheffersomyces</taxon>
    </lineage>
</organism>
<dbReference type="EMBL" id="CP000499">
    <property type="protein sequence ID" value="ABN66667.1"/>
    <property type="molecule type" value="Genomic_DNA"/>
</dbReference>
<dbReference type="SMR" id="A3LUW5"/>
<dbReference type="FunCoup" id="A3LUW5">
    <property type="interactions" value="1419"/>
</dbReference>
<dbReference type="STRING" id="322104.A3LUW5"/>
<dbReference type="KEGG" id="pic:PICST_46030"/>
<dbReference type="eggNOG" id="KOG1628">
    <property type="taxonomic scope" value="Eukaryota"/>
</dbReference>
<dbReference type="HOGENOM" id="CLU_062507_0_0_1"/>
<dbReference type="InParanoid" id="A3LUW5"/>
<dbReference type="OMA" id="MHNDESD"/>
<dbReference type="OrthoDB" id="9834376at2759"/>
<dbReference type="Proteomes" id="UP000002258">
    <property type="component" value="Chromosome 5"/>
</dbReference>
<dbReference type="GO" id="GO:0022627">
    <property type="term" value="C:cytosolic small ribosomal subunit"/>
    <property type="evidence" value="ECO:0007669"/>
    <property type="project" value="UniProtKB-UniRule"/>
</dbReference>
<dbReference type="GO" id="GO:0003735">
    <property type="term" value="F:structural constituent of ribosome"/>
    <property type="evidence" value="ECO:0007669"/>
    <property type="project" value="UniProtKB-UniRule"/>
</dbReference>
<dbReference type="GO" id="GO:0006412">
    <property type="term" value="P:translation"/>
    <property type="evidence" value="ECO:0007669"/>
    <property type="project" value="UniProtKB-UniRule"/>
</dbReference>
<dbReference type="HAMAP" id="MF_03122">
    <property type="entry name" value="Ribosomal_eS1_euk"/>
    <property type="match status" value="1"/>
</dbReference>
<dbReference type="InterPro" id="IPR001593">
    <property type="entry name" value="Ribosomal_eS1"/>
</dbReference>
<dbReference type="InterPro" id="IPR027500">
    <property type="entry name" value="Ribosomal_eS1_euk"/>
</dbReference>
<dbReference type="PANTHER" id="PTHR11830">
    <property type="entry name" value="40S RIBOSOMAL PROTEIN S3A"/>
    <property type="match status" value="1"/>
</dbReference>
<dbReference type="Pfam" id="PF01015">
    <property type="entry name" value="Ribosomal_S3Ae"/>
    <property type="match status" value="1"/>
</dbReference>
<dbReference type="SMART" id="SM01397">
    <property type="entry name" value="Ribosomal_S3Ae"/>
    <property type="match status" value="1"/>
</dbReference>
<accession>A3LUW5</accession>
<feature type="initiator methionine" description="Removed" evidence="1">
    <location>
        <position position="1"/>
    </location>
</feature>
<feature type="chain" id="PRO_0000389399" description="Small ribosomal subunit protein eS1A">
    <location>
        <begin position="2"/>
        <end position="256"/>
    </location>
</feature>
<feature type="modified residue" description="N-acetylalanine; partial" evidence="1">
    <location>
        <position position="2"/>
    </location>
</feature>
<evidence type="ECO:0000255" key="1">
    <source>
        <dbReference type="HAMAP-Rule" id="MF_03122"/>
    </source>
</evidence>
<evidence type="ECO:0000305" key="2"/>
<keyword id="KW-0007">Acetylation</keyword>
<keyword id="KW-0963">Cytoplasm</keyword>
<keyword id="KW-1185">Reference proteome</keyword>
<keyword id="KW-0687">Ribonucleoprotein</keyword>
<keyword id="KW-0689">Ribosomal protein</keyword>
<comment type="subunit">
    <text evidence="1">Component of the small ribosomal subunit. Mature ribosomes consist of a small (40S) and a large (60S) subunit. The 40S subunit contains about 33 different proteins and 1 molecule of RNA (18S). The 60S subunit contains about 49 different proteins and 3 molecules of RNA (25S, 5.8S and 5S).</text>
</comment>
<comment type="subcellular location">
    <subcellularLocation>
        <location evidence="1">Cytoplasm</location>
    </subcellularLocation>
</comment>
<comment type="similarity">
    <text evidence="1">Belongs to the eukaryotic ribosomal protein eS1 family.</text>
</comment>
<proteinExistence type="inferred from homology"/>